<protein>
    <recommendedName>
        <fullName>CAAX prenyl protease 1</fullName>
        <ecNumber>3.4.24.84</ecNumber>
    </recommendedName>
    <alternativeName>
        <fullName>A-factor-converting enzyme</fullName>
    </alternativeName>
    <alternativeName>
        <fullName>Prenyl protein-specific endoprotease 1</fullName>
        <shortName>PPSEP 1</shortName>
    </alternativeName>
</protein>
<organism>
    <name type="scientific">Saccharomyces cerevisiae (strain ATCC 204508 / S288c)</name>
    <name type="common">Baker's yeast</name>
    <dbReference type="NCBI Taxonomy" id="559292"/>
    <lineage>
        <taxon>Eukaryota</taxon>
        <taxon>Fungi</taxon>
        <taxon>Dikarya</taxon>
        <taxon>Ascomycota</taxon>
        <taxon>Saccharomycotina</taxon>
        <taxon>Saccharomycetes</taxon>
        <taxon>Saccharomycetales</taxon>
        <taxon>Saccharomycetaceae</taxon>
        <taxon>Saccharomyces</taxon>
    </lineage>
</organism>
<dbReference type="EC" id="3.4.24.84"/>
<dbReference type="EMBL" id="U77137">
    <property type="protein sequence ID" value="AAB38271.1"/>
    <property type="molecule type" value="Genomic_DNA"/>
</dbReference>
<dbReference type="EMBL" id="Z49617">
    <property type="protein sequence ID" value="CAA89647.1"/>
    <property type="molecule type" value="Genomic_DNA"/>
</dbReference>
<dbReference type="EMBL" id="BK006943">
    <property type="protein sequence ID" value="DAA08902.1"/>
    <property type="molecule type" value="Genomic_DNA"/>
</dbReference>
<dbReference type="PIR" id="S57140">
    <property type="entry name" value="S57140"/>
</dbReference>
<dbReference type="RefSeq" id="NP_012651.1">
    <property type="nucleotide sequence ID" value="NM_001181775.1"/>
</dbReference>
<dbReference type="SMR" id="P47154"/>
<dbReference type="BioGRID" id="33873">
    <property type="interactions" value="381"/>
</dbReference>
<dbReference type="DIP" id="DIP-1390N"/>
<dbReference type="FunCoup" id="P47154">
    <property type="interactions" value="1004"/>
</dbReference>
<dbReference type="IntAct" id="P47154">
    <property type="interactions" value="29"/>
</dbReference>
<dbReference type="MINT" id="P47154"/>
<dbReference type="STRING" id="4932.YJR117W"/>
<dbReference type="ChEMBL" id="CHEMBL1741185"/>
<dbReference type="DrugCentral" id="P47154"/>
<dbReference type="MEROPS" id="M48.001"/>
<dbReference type="TCDB" id="9.B.1.1.3">
    <property type="family name" value="the integral membrane caax protease (caax protease) family"/>
</dbReference>
<dbReference type="iPTMnet" id="P47154"/>
<dbReference type="PaxDb" id="4932-YJR117W"/>
<dbReference type="PeptideAtlas" id="P47154"/>
<dbReference type="DNASU" id="853581"/>
<dbReference type="EnsemblFungi" id="YJR117W_mRNA">
    <property type="protein sequence ID" value="YJR117W"/>
    <property type="gene ID" value="YJR117W"/>
</dbReference>
<dbReference type="GeneID" id="853581"/>
<dbReference type="KEGG" id="sce:YJR117W"/>
<dbReference type="AGR" id="SGD:S000003878"/>
<dbReference type="SGD" id="S000003878">
    <property type="gene designation" value="STE24"/>
</dbReference>
<dbReference type="VEuPathDB" id="FungiDB:YJR117W"/>
<dbReference type="eggNOG" id="KOG2719">
    <property type="taxonomic scope" value="Eukaryota"/>
</dbReference>
<dbReference type="GeneTree" id="ENSGT00390000002053"/>
<dbReference type="HOGENOM" id="CLU_025947_3_3_1"/>
<dbReference type="InParanoid" id="P47154"/>
<dbReference type="OMA" id="FVIEEKF"/>
<dbReference type="OrthoDB" id="360839at2759"/>
<dbReference type="BioCyc" id="MetaCyc:YJR117W-MONOMER"/>
<dbReference type="BioCyc" id="YEAST:YJR117W-MONOMER"/>
<dbReference type="BRENDA" id="3.4.24.84">
    <property type="organism ID" value="984"/>
</dbReference>
<dbReference type="BioGRID-ORCS" id="853581">
    <property type="hits" value="0 hits in 10 CRISPR screens"/>
</dbReference>
<dbReference type="PRO" id="PR:P47154"/>
<dbReference type="Proteomes" id="UP000002311">
    <property type="component" value="Chromosome X"/>
</dbReference>
<dbReference type="RNAct" id="P47154">
    <property type="molecule type" value="protein"/>
</dbReference>
<dbReference type="GO" id="GO:0005783">
    <property type="term" value="C:endoplasmic reticulum"/>
    <property type="evidence" value="ECO:0007005"/>
    <property type="project" value="SGD"/>
</dbReference>
<dbReference type="GO" id="GO:0005789">
    <property type="term" value="C:endoplasmic reticulum membrane"/>
    <property type="evidence" value="ECO:0000314"/>
    <property type="project" value="SGD"/>
</dbReference>
<dbReference type="GO" id="GO:0005741">
    <property type="term" value="C:mitochondrial outer membrane"/>
    <property type="evidence" value="ECO:0007005"/>
    <property type="project" value="SGD"/>
</dbReference>
<dbReference type="GO" id="GO:0005637">
    <property type="term" value="C:nuclear inner membrane"/>
    <property type="evidence" value="ECO:0000315"/>
    <property type="project" value="SGD"/>
</dbReference>
<dbReference type="GO" id="GO:0046872">
    <property type="term" value="F:metal ion binding"/>
    <property type="evidence" value="ECO:0007669"/>
    <property type="project" value="UniProtKB-KW"/>
</dbReference>
<dbReference type="GO" id="GO:0004222">
    <property type="term" value="F:metalloendopeptidase activity"/>
    <property type="evidence" value="ECO:0000314"/>
    <property type="project" value="SGD"/>
</dbReference>
<dbReference type="GO" id="GO:0071586">
    <property type="term" value="P:CAAX-box protein processing"/>
    <property type="evidence" value="ECO:0000315"/>
    <property type="project" value="SGD"/>
</dbReference>
<dbReference type="GO" id="GO:0036503">
    <property type="term" value="P:ERAD pathway"/>
    <property type="evidence" value="ECO:0000315"/>
    <property type="project" value="SGD"/>
</dbReference>
<dbReference type="GO" id="GO:0120236">
    <property type="term" value="P:negative regulation of post-translational protein targeting to membrane, translocation"/>
    <property type="evidence" value="ECO:0000315"/>
    <property type="project" value="SGD"/>
</dbReference>
<dbReference type="GO" id="GO:0071432">
    <property type="term" value="P:peptide mating pheromone maturation involved in positive regulation of conjugation with cellular fusion"/>
    <property type="evidence" value="ECO:0000314"/>
    <property type="project" value="SGD"/>
</dbReference>
<dbReference type="GO" id="GO:0031204">
    <property type="term" value="P:post-translational protein targeting to membrane, translocation"/>
    <property type="evidence" value="ECO:0000315"/>
    <property type="project" value="SGD"/>
</dbReference>
<dbReference type="GO" id="GO:0016485">
    <property type="term" value="P:protein processing"/>
    <property type="evidence" value="ECO:0000314"/>
    <property type="project" value="SGD"/>
</dbReference>
<dbReference type="GO" id="GO:0019236">
    <property type="term" value="P:response to pheromone"/>
    <property type="evidence" value="ECO:0007669"/>
    <property type="project" value="UniProtKB-KW"/>
</dbReference>
<dbReference type="CDD" id="cd07343">
    <property type="entry name" value="M48A_Zmpste24p_like"/>
    <property type="match status" value="1"/>
</dbReference>
<dbReference type="FunFam" id="3.30.2010.10:FF:000002">
    <property type="entry name" value="CAAX prenyl protease"/>
    <property type="match status" value="1"/>
</dbReference>
<dbReference type="Gene3D" id="3.30.2010.10">
    <property type="entry name" value="Metalloproteases ('zincins'), catalytic domain"/>
    <property type="match status" value="1"/>
</dbReference>
<dbReference type="InterPro" id="IPR027057">
    <property type="entry name" value="CAXX_Prtase_1"/>
</dbReference>
<dbReference type="InterPro" id="IPR001915">
    <property type="entry name" value="Peptidase_M48"/>
</dbReference>
<dbReference type="InterPro" id="IPR032456">
    <property type="entry name" value="Peptidase_M48_N"/>
</dbReference>
<dbReference type="PANTHER" id="PTHR10120">
    <property type="entry name" value="CAAX PRENYL PROTEASE 1"/>
    <property type="match status" value="1"/>
</dbReference>
<dbReference type="Pfam" id="PF01435">
    <property type="entry name" value="Peptidase_M48"/>
    <property type="match status" value="1"/>
</dbReference>
<dbReference type="Pfam" id="PF16491">
    <property type="entry name" value="Peptidase_M48_N"/>
    <property type="match status" value="1"/>
</dbReference>
<dbReference type="PROSITE" id="PS00142">
    <property type="entry name" value="ZINC_PROTEASE"/>
    <property type="match status" value="1"/>
</dbReference>
<keyword id="KW-0256">Endoplasmic reticulum</keyword>
<keyword id="KW-0378">Hydrolase</keyword>
<keyword id="KW-0472">Membrane</keyword>
<keyword id="KW-0479">Metal-binding</keyword>
<keyword id="KW-0482">Metalloprotease</keyword>
<keyword id="KW-0589">Pheromone response</keyword>
<keyword id="KW-0645">Protease</keyword>
<keyword id="KW-1185">Reference proteome</keyword>
<keyword id="KW-0812">Transmembrane</keyword>
<keyword id="KW-1133">Transmembrane helix</keyword>
<keyword id="KW-0862">Zinc</keyword>
<evidence type="ECO:0000250" key="1"/>
<evidence type="ECO:0000255" key="2"/>
<evidence type="ECO:0000255" key="3">
    <source>
        <dbReference type="PROSITE-ProRule" id="PRU10095"/>
    </source>
</evidence>
<evidence type="ECO:0000269" key="4">
    <source>
    </source>
</evidence>
<evidence type="ECO:0000269" key="5">
    <source>
    </source>
</evidence>
<evidence type="ECO:0000269" key="6">
    <source>
    </source>
</evidence>
<evidence type="ECO:0000269" key="7">
    <source>
    </source>
</evidence>
<evidence type="ECO:0000269" key="8">
    <source>
    </source>
</evidence>
<evidence type="ECO:0000269" key="9">
    <source>
    </source>
</evidence>
<evidence type="ECO:0000269" key="10">
    <source>
    </source>
</evidence>
<evidence type="ECO:0000305" key="11"/>
<gene>
    <name type="primary">STE24</name>
    <name type="synonym">AFC1</name>
    <name type="ordered locus">YJR117W</name>
    <name type="ORF">J2032</name>
</gene>
<feature type="chain" id="PRO_0000138846" description="CAAX prenyl protease 1">
    <location>
        <begin position="1"/>
        <end position="453"/>
    </location>
</feature>
<feature type="topological domain" description="Lumenal" evidence="2">
    <location>
        <begin position="1"/>
        <end position="12"/>
    </location>
</feature>
<feature type="transmembrane region" description="Helical" evidence="2">
    <location>
        <begin position="13"/>
        <end position="33"/>
    </location>
</feature>
<feature type="topological domain" description="Cytoplasmic" evidence="2">
    <location>
        <begin position="34"/>
        <end position="89"/>
    </location>
</feature>
<feature type="transmembrane region" description="Helical" evidence="2">
    <location>
        <begin position="90"/>
        <end position="110"/>
    </location>
</feature>
<feature type="topological domain" description="Lumenal" evidence="2">
    <location>
        <begin position="111"/>
        <end position="121"/>
    </location>
</feature>
<feature type="transmembrane region" description="Helical" evidence="2">
    <location>
        <begin position="122"/>
        <end position="142"/>
    </location>
</feature>
<feature type="topological domain" description="Cytoplasmic" evidence="2">
    <location>
        <begin position="143"/>
        <end position="167"/>
    </location>
</feature>
<feature type="transmembrane region" description="Helical" evidence="2">
    <location>
        <begin position="168"/>
        <end position="188"/>
    </location>
</feature>
<feature type="topological domain" description="Lumenal" evidence="2">
    <location>
        <begin position="189"/>
        <end position="197"/>
    </location>
</feature>
<feature type="transmembrane region" description="Helical" evidence="2">
    <location>
        <begin position="198"/>
        <end position="218"/>
    </location>
</feature>
<feature type="topological domain" description="Cytoplasmic" evidence="2">
    <location>
        <begin position="219"/>
        <end position="306"/>
    </location>
</feature>
<feature type="transmembrane region" description="Helical" evidence="2">
    <location>
        <begin position="307"/>
        <end position="327"/>
    </location>
</feature>
<feature type="topological domain" description="Lumenal" evidence="2">
    <location>
        <begin position="328"/>
        <end position="357"/>
    </location>
</feature>
<feature type="transmembrane region" description="Helical" evidence="2">
    <location>
        <begin position="358"/>
        <end position="378"/>
    </location>
</feature>
<feature type="topological domain" description="Cytoplasmic" evidence="2">
    <location>
        <begin position="379"/>
        <end position="453"/>
    </location>
</feature>
<feature type="active site" evidence="3">
    <location>
        <position position="298"/>
    </location>
</feature>
<feature type="active site" description="Proton donor" evidence="3">
    <location>
        <position position="394"/>
    </location>
</feature>
<feature type="binding site" evidence="3">
    <location>
        <position position="297"/>
    </location>
    <ligand>
        <name>Zn(2+)</name>
        <dbReference type="ChEBI" id="CHEBI:29105"/>
        <note>catalytic</note>
    </ligand>
</feature>
<feature type="binding site" evidence="3">
    <location>
        <position position="301"/>
    </location>
    <ligand>
        <name>Zn(2+)</name>
        <dbReference type="ChEBI" id="CHEBI:29105"/>
        <note>catalytic</note>
    </ligand>
</feature>
<feature type="binding site" evidence="3">
    <location>
        <position position="390"/>
    </location>
    <ligand>
        <name>Zn(2+)</name>
        <dbReference type="ChEBI" id="CHEBI:29105"/>
        <note>catalytic</note>
    </ligand>
</feature>
<accession>P47154</accession>
<accession>D6VWT6</accession>
<name>STE24_YEAST</name>
<sequence>MFDLKTILDHPNIPWKLIISGFSIAQFSFESYLTYRQYQKLSETKLPPVLEDEIDDETFHKSRNYSRAKAKFSIFGDVYNLAQKLVFIKYDLFPKIWHMAVSLLNAVLPVRFHMVSTVAQSLCFLGLLSSLSTLVDLPLSYYSHFVLEEKFGFNKLTVQLWITDMIKSLTLAYAIGGPILYLFLKIFDKFPTDFLWYIMVFLFVVQILAMTIIPVFIMPMFNKFTPLEDGELKKSIESLADRVGFPLDKIFVIDGSKRSSHSNAYFTGLPFTSKRIVLFDTLVNSNSTDEITAVLAHEIGHWQKNHIVNMVIFSQLHTFLIFSLFTSIYRNTSFYNTFGFFLEKSTGSFVDPVITKEFPIIIGFMLFNDLLTPLECAMQFVMSLISRTHEYQADAYAKKLGYKQNLCRALIDLQIKNLSTMNVDPLYSSYHYSHPTLAERLTALDYVSEKKKN</sequence>
<comment type="function">
    <text evidence="4 6 7 8 9">Proteolytically removes the C-terminal three residues of farnesylated A-factor mating pheromone. Also acts to cleave the N-terminal extension of the pheromone. Does not act on Ras.</text>
</comment>
<comment type="catalytic activity">
    <reaction>
        <text>Hydrolyzes the peptide bond -P2-(S-farnesyl or geranylgeranyl)C-P1'-P2'-P3'-COOH where P1' and P2' are amino acids with aliphatic side chains and P3' is any C-terminal residue.</text>
        <dbReference type="EC" id="3.4.24.84"/>
    </reaction>
</comment>
<comment type="cofactor">
    <cofactor evidence="1">
        <name>Zn(2+)</name>
        <dbReference type="ChEBI" id="CHEBI:29105"/>
    </cofactor>
    <text evidence="1">Binds 1 zinc ion per subunit.</text>
</comment>
<comment type="subcellular location">
    <subcellularLocation>
        <location evidence="10">Endoplasmic reticulum membrane</location>
        <topology evidence="10">Multi-pass membrane protein</topology>
    </subcellularLocation>
</comment>
<comment type="miscellaneous">
    <text evidence="5">Present with 19600 molecules/cell in log phase SD medium.</text>
</comment>
<comment type="similarity">
    <text evidence="11">Belongs to the peptidase M48A family.</text>
</comment>
<reference key="1">
    <citation type="journal article" date="1997" name="J. Cell Biol.">
        <title>A novel membrane-associated metalloprotease, Ste24p, is required for the first step of NH2-terminal processing of the yeast a-factor precursor.</title>
        <authorList>
            <person name="Fujimura-Kamada K."/>
            <person name="Nouvet F.J."/>
            <person name="Michaelis S."/>
        </authorList>
    </citation>
    <scope>NUCLEOTIDE SEQUENCE [GENOMIC DNA]</scope>
    <scope>FUNCTION</scope>
</reference>
<reference key="2">
    <citation type="journal article" date="1996" name="EMBO J.">
        <title>Complete nucleotide sequence of Saccharomyces cerevisiae chromosome X.</title>
        <authorList>
            <person name="Galibert F."/>
            <person name="Alexandraki D."/>
            <person name="Baur A."/>
            <person name="Boles E."/>
            <person name="Chalwatzis N."/>
            <person name="Chuat J.-C."/>
            <person name="Coster F."/>
            <person name="Cziepluch C."/>
            <person name="de Haan M."/>
            <person name="Domdey H."/>
            <person name="Durand P."/>
            <person name="Entian K.-D."/>
            <person name="Gatius M."/>
            <person name="Goffeau A."/>
            <person name="Grivell L.A."/>
            <person name="Hennemann A."/>
            <person name="Herbert C.J."/>
            <person name="Heumann K."/>
            <person name="Hilger F."/>
            <person name="Hollenberg C.P."/>
            <person name="Huang M.-E."/>
            <person name="Jacq C."/>
            <person name="Jauniaux J.-C."/>
            <person name="Katsoulou C."/>
            <person name="Kirchrath L."/>
            <person name="Kleine K."/>
            <person name="Kordes E."/>
            <person name="Koetter P."/>
            <person name="Liebl S."/>
            <person name="Louis E.J."/>
            <person name="Manus V."/>
            <person name="Mewes H.-W."/>
            <person name="Miosga T."/>
            <person name="Obermaier B."/>
            <person name="Perea J."/>
            <person name="Pohl T.M."/>
            <person name="Portetelle D."/>
            <person name="Pujol A."/>
            <person name="Purnelle B."/>
            <person name="Ramezani Rad M."/>
            <person name="Rasmussen S.W."/>
            <person name="Rose M."/>
            <person name="Rossau R."/>
            <person name="Schaaff-Gerstenschlaeger I."/>
            <person name="Smits P.H.M."/>
            <person name="Scarcez T."/>
            <person name="Soriano N."/>
            <person name="To Van D."/>
            <person name="Tzermia M."/>
            <person name="Van Broekhoven A."/>
            <person name="Vandenbol M."/>
            <person name="Wedler H."/>
            <person name="von Wettstein D."/>
            <person name="Wambutt R."/>
            <person name="Zagulski M."/>
            <person name="Zollner A."/>
            <person name="Karpfinger-Hartl L."/>
        </authorList>
    </citation>
    <scope>NUCLEOTIDE SEQUENCE [LARGE SCALE GENOMIC DNA]</scope>
    <source>
        <strain>ATCC 204508 / S288c</strain>
    </source>
</reference>
<reference key="3">
    <citation type="journal article" date="2014" name="G3 (Bethesda)">
        <title>The reference genome sequence of Saccharomyces cerevisiae: Then and now.</title>
        <authorList>
            <person name="Engel S.R."/>
            <person name="Dietrich F.S."/>
            <person name="Fisk D.G."/>
            <person name="Binkley G."/>
            <person name="Balakrishnan R."/>
            <person name="Costanzo M.C."/>
            <person name="Dwight S.S."/>
            <person name="Hitz B.C."/>
            <person name="Karra K."/>
            <person name="Nash R.S."/>
            <person name="Weng S."/>
            <person name="Wong E.D."/>
            <person name="Lloyd P."/>
            <person name="Skrzypek M.S."/>
            <person name="Miyasato S.R."/>
            <person name="Simison M."/>
            <person name="Cherry J.M."/>
        </authorList>
    </citation>
    <scope>GENOME REANNOTATION</scope>
    <source>
        <strain>ATCC 204508 / S288c</strain>
    </source>
</reference>
<reference key="4">
    <citation type="journal article" date="1997" name="Science">
        <title>Modulation of Ras and a-factor function by carboxyl-terminal proteolysis.</title>
        <authorList>
            <person name="Boyartchuk V.L."/>
            <person name="Ashby M.N."/>
            <person name="Rine J."/>
        </authorList>
    </citation>
    <scope>FUNCTION</scope>
</reference>
<reference key="5">
    <citation type="journal article" date="1998" name="J. Cell Biol.">
        <title>Dual roles for Ste24p in yeast a-factor maturation: NH2-terminal proteolysis and COOH-terminal CAAX processing.</title>
        <authorList>
            <person name="Tam A."/>
            <person name="Nouvet F.J."/>
            <person name="Fujimura-Kamada K."/>
            <person name="Slunt H."/>
            <person name="Sisodia S.S."/>
            <person name="Michaelis S."/>
        </authorList>
    </citation>
    <scope>FUNCTION</scope>
</reference>
<reference key="6">
    <citation type="journal article" date="1998" name="Genetics">
        <title>Roles of prenyl protein proteases in maturation of Saccharomyces cerevisiae a-factor.</title>
        <authorList>
            <person name="Boyartchuk V.L."/>
            <person name="Rine J."/>
        </authorList>
    </citation>
    <scope>FUNCTION</scope>
</reference>
<reference key="7">
    <citation type="journal article" date="2000" name="J. Biol. Chem.">
        <title>Reconstitution of the Ste24p-dependent N-terminal proteolytic step in yeast a-Factor biogenesis.</title>
        <authorList>
            <person name="Schmidt W.K."/>
            <person name="Tam A."/>
            <person name="Michaelis S."/>
        </authorList>
    </citation>
    <scope>FUNCTION</scope>
</reference>
<reference key="8">
    <citation type="journal article" date="2000" name="Mol. Cell. Biol.">
        <title>The CaaX proteases, Afc1p and Rce1p, have overlapping but distinct substrate specificities.</title>
        <authorList>
            <person name="Trueblood C.E."/>
            <person name="Boyartchuk V.L."/>
            <person name="Picologlou E.A."/>
            <person name="Rozema D."/>
            <person name="Poulter C.D."/>
            <person name="Rine J."/>
        </authorList>
    </citation>
    <scope>CHARACTERIZATION</scope>
</reference>
<reference key="9">
    <citation type="journal article" date="1998" name="Proc. Natl. Acad. Sci. U.S.A.">
        <title>Endoplasmic reticulum membrane localization of Rce1p and Ste24p, yeast proteases involved in carboxyl-terminal CAAX protein processing and amino-terminal a-factor cleavage.</title>
        <authorList>
            <person name="Schmidt W.K."/>
            <person name="Tam A."/>
            <person name="Fujimura-Kamada K."/>
            <person name="Michaelis S."/>
        </authorList>
    </citation>
    <scope>SUBCELLULAR LOCATION</scope>
</reference>
<reference key="10">
    <citation type="journal article" date="2003" name="Nature">
        <title>Global analysis of protein expression in yeast.</title>
        <authorList>
            <person name="Ghaemmaghami S."/>
            <person name="Huh W.-K."/>
            <person name="Bower K."/>
            <person name="Howson R.W."/>
            <person name="Belle A."/>
            <person name="Dephoure N."/>
            <person name="O'Shea E.K."/>
            <person name="Weissman J.S."/>
        </authorList>
    </citation>
    <scope>LEVEL OF PROTEIN EXPRESSION [LARGE SCALE ANALYSIS]</scope>
</reference>
<reference key="11">
    <citation type="journal article" date="2006" name="Proc. Natl. Acad. Sci. U.S.A.">
        <title>A global topology map of the Saccharomyces cerevisiae membrane proteome.</title>
        <authorList>
            <person name="Kim H."/>
            <person name="Melen K."/>
            <person name="Oesterberg M."/>
            <person name="von Heijne G."/>
        </authorList>
    </citation>
    <scope>TOPOLOGY [LARGE SCALE ANALYSIS]</scope>
    <source>
        <strain>ATCC 208353 / W303-1A</strain>
    </source>
</reference>
<proteinExistence type="evidence at protein level"/>